<dbReference type="EMBL" id="AE006468">
    <property type="protein sequence ID" value="AAL20726.1"/>
    <property type="molecule type" value="Genomic_DNA"/>
</dbReference>
<dbReference type="RefSeq" id="NP_460767.3">
    <property type="nucleotide sequence ID" value="NC_003197.2"/>
</dbReference>
<dbReference type="RefSeq" id="WP_000785857.1">
    <property type="nucleotide sequence ID" value="NC_003197.2"/>
</dbReference>
<dbReference type="SMR" id="Q8ZP12"/>
<dbReference type="STRING" id="99287.STM1811"/>
<dbReference type="PaxDb" id="99287-STM1811"/>
<dbReference type="DNASU" id="1253330"/>
<dbReference type="GeneID" id="1253330"/>
<dbReference type="KEGG" id="stm:STM1811"/>
<dbReference type="HOGENOM" id="CLU_109769_0_1_6"/>
<dbReference type="PhylomeDB" id="Q8ZP12"/>
<dbReference type="BioCyc" id="SENT99287:STM1811-MONOMER"/>
<dbReference type="Proteomes" id="UP000001014">
    <property type="component" value="Chromosome"/>
</dbReference>
<dbReference type="HAMAP" id="MF_00676">
    <property type="entry name" value="UPF0260"/>
    <property type="match status" value="1"/>
</dbReference>
<dbReference type="InterPro" id="IPR005358">
    <property type="entry name" value="Puta_zinc/iron-chelating_dom"/>
</dbReference>
<dbReference type="InterPro" id="IPR008228">
    <property type="entry name" value="UCP006173"/>
</dbReference>
<dbReference type="NCBIfam" id="NF003498">
    <property type="entry name" value="PRK05170.1-1"/>
    <property type="match status" value="1"/>
</dbReference>
<dbReference type="NCBIfam" id="NF003501">
    <property type="entry name" value="PRK05170.1-5"/>
    <property type="match status" value="1"/>
</dbReference>
<dbReference type="NCBIfam" id="NF003503">
    <property type="entry name" value="PRK05170.2-1"/>
    <property type="match status" value="1"/>
</dbReference>
<dbReference type="NCBIfam" id="NF003507">
    <property type="entry name" value="PRK05170.2-5"/>
    <property type="match status" value="1"/>
</dbReference>
<dbReference type="PANTHER" id="PTHR37421">
    <property type="entry name" value="UPF0260 PROTEIN YCGN"/>
    <property type="match status" value="1"/>
</dbReference>
<dbReference type="PANTHER" id="PTHR37421:SF1">
    <property type="entry name" value="UPF0260 PROTEIN YCGN"/>
    <property type="match status" value="1"/>
</dbReference>
<dbReference type="Pfam" id="PF03692">
    <property type="entry name" value="CxxCxxCC"/>
    <property type="match status" value="1"/>
</dbReference>
<dbReference type="PIRSF" id="PIRSF006173">
    <property type="entry name" value="UCP006173"/>
    <property type="match status" value="1"/>
</dbReference>
<proteinExistence type="inferred from homology"/>
<comment type="similarity">
    <text evidence="1">Belongs to the UPF0260 family.</text>
</comment>
<keyword id="KW-1185">Reference proteome</keyword>
<evidence type="ECO:0000255" key="1">
    <source>
        <dbReference type="HAMAP-Rule" id="MF_00676"/>
    </source>
</evidence>
<gene>
    <name evidence="1" type="primary">ycgN</name>
    <name type="ordered locus">STM1811</name>
</gene>
<reference key="1">
    <citation type="journal article" date="2001" name="Nature">
        <title>Complete genome sequence of Salmonella enterica serovar Typhimurium LT2.</title>
        <authorList>
            <person name="McClelland M."/>
            <person name="Sanderson K.E."/>
            <person name="Spieth J."/>
            <person name="Clifton S.W."/>
            <person name="Latreille P."/>
            <person name="Courtney L."/>
            <person name="Porwollik S."/>
            <person name="Ali J."/>
            <person name="Dante M."/>
            <person name="Du F."/>
            <person name="Hou S."/>
            <person name="Layman D."/>
            <person name="Leonard S."/>
            <person name="Nguyen C."/>
            <person name="Scott K."/>
            <person name="Holmes A."/>
            <person name="Grewal N."/>
            <person name="Mulvaney E."/>
            <person name="Ryan E."/>
            <person name="Sun H."/>
            <person name="Florea L."/>
            <person name="Miller W."/>
            <person name="Stoneking T."/>
            <person name="Nhan M."/>
            <person name="Waterston R."/>
            <person name="Wilson R.K."/>
        </authorList>
    </citation>
    <scope>NUCLEOTIDE SEQUENCE [LARGE SCALE GENOMIC DNA]</scope>
    <source>
        <strain>LT2 / SGSC1412 / ATCC 700720</strain>
    </source>
</reference>
<protein>
    <recommendedName>
        <fullName evidence="1">UPF0260 protein YcgN</fullName>
    </recommendedName>
</protein>
<feature type="chain" id="PRO_0000214592" description="UPF0260 protein YcgN">
    <location>
        <begin position="1"/>
        <end position="153"/>
    </location>
</feature>
<name>YCGN_SALTY</name>
<accession>Q8ZP12</accession>
<organism>
    <name type="scientific">Salmonella typhimurium (strain LT2 / SGSC1412 / ATCC 700720)</name>
    <dbReference type="NCBI Taxonomy" id="99287"/>
    <lineage>
        <taxon>Bacteria</taxon>
        <taxon>Pseudomonadati</taxon>
        <taxon>Pseudomonadota</taxon>
        <taxon>Gammaproteobacteria</taxon>
        <taxon>Enterobacterales</taxon>
        <taxon>Enterobacteriaceae</taxon>
        <taxon>Salmonella</taxon>
    </lineage>
</organism>
<sequence>MADTLMSDTPFWQRKTLDEMTDAEWESLCDGCGQCCLHKLMDEDTDEIYFTNVACRQLNIKTCQCRHYERRFEFEPDCIKLTRENLPDFEWLPMTCAYRLLAEGKPLPTWHPLLTGSKAAMHGERISVRHIAVKESEVRDWQDHILNKPSWAE</sequence>